<dbReference type="EC" id="4.6.1.17" evidence="1"/>
<dbReference type="EMBL" id="CP000112">
    <property type="protein sequence ID" value="ABB37050.1"/>
    <property type="molecule type" value="Genomic_DNA"/>
</dbReference>
<dbReference type="RefSeq" id="WP_011366398.1">
    <property type="nucleotide sequence ID" value="NC_007519.1"/>
</dbReference>
<dbReference type="SMR" id="Q316U6"/>
<dbReference type="STRING" id="207559.Dde_0249"/>
<dbReference type="KEGG" id="dde:Dde_0249"/>
<dbReference type="eggNOG" id="COG0315">
    <property type="taxonomic scope" value="Bacteria"/>
</dbReference>
<dbReference type="HOGENOM" id="CLU_074693_1_1_7"/>
<dbReference type="UniPathway" id="UPA00344"/>
<dbReference type="Proteomes" id="UP000002710">
    <property type="component" value="Chromosome"/>
</dbReference>
<dbReference type="GO" id="GO:0061799">
    <property type="term" value="F:cyclic pyranopterin monophosphate synthase activity"/>
    <property type="evidence" value="ECO:0007669"/>
    <property type="project" value="UniProtKB-UniRule"/>
</dbReference>
<dbReference type="GO" id="GO:0006777">
    <property type="term" value="P:Mo-molybdopterin cofactor biosynthetic process"/>
    <property type="evidence" value="ECO:0007669"/>
    <property type="project" value="UniProtKB-UniRule"/>
</dbReference>
<dbReference type="CDD" id="cd01420">
    <property type="entry name" value="MoaC_PE"/>
    <property type="match status" value="1"/>
</dbReference>
<dbReference type="Gene3D" id="3.30.70.640">
    <property type="entry name" value="Molybdopterin cofactor biosynthesis C (MoaC) domain"/>
    <property type="match status" value="1"/>
</dbReference>
<dbReference type="HAMAP" id="MF_01224_B">
    <property type="entry name" value="MoaC_B"/>
    <property type="match status" value="1"/>
</dbReference>
<dbReference type="InterPro" id="IPR023045">
    <property type="entry name" value="MoaC"/>
</dbReference>
<dbReference type="InterPro" id="IPR047594">
    <property type="entry name" value="MoaC_bact/euk"/>
</dbReference>
<dbReference type="InterPro" id="IPR036522">
    <property type="entry name" value="MoaC_sf"/>
</dbReference>
<dbReference type="InterPro" id="IPR050105">
    <property type="entry name" value="MoCo_biosynth_MoaA/MoaC"/>
</dbReference>
<dbReference type="InterPro" id="IPR002820">
    <property type="entry name" value="Mopterin_CF_biosynth-C_dom"/>
</dbReference>
<dbReference type="NCBIfam" id="TIGR00581">
    <property type="entry name" value="moaC"/>
    <property type="match status" value="1"/>
</dbReference>
<dbReference type="NCBIfam" id="NF006870">
    <property type="entry name" value="PRK09364.1"/>
    <property type="match status" value="1"/>
</dbReference>
<dbReference type="PANTHER" id="PTHR22960:SF29">
    <property type="entry name" value="CYCLIC PYRANOPTERIN MONOPHOSPHATE SYNTHASE"/>
    <property type="match status" value="1"/>
</dbReference>
<dbReference type="PANTHER" id="PTHR22960">
    <property type="entry name" value="MOLYBDOPTERIN COFACTOR SYNTHESIS PROTEIN A"/>
    <property type="match status" value="1"/>
</dbReference>
<dbReference type="Pfam" id="PF01967">
    <property type="entry name" value="MoaC"/>
    <property type="match status" value="1"/>
</dbReference>
<dbReference type="SUPFAM" id="SSF55040">
    <property type="entry name" value="Molybdenum cofactor biosynthesis protein C, MoaC"/>
    <property type="match status" value="1"/>
</dbReference>
<protein>
    <recommendedName>
        <fullName evidence="1">Cyclic pyranopterin monophosphate synthase</fullName>
        <ecNumber evidence="1">4.6.1.17</ecNumber>
    </recommendedName>
    <alternativeName>
        <fullName evidence="1">Molybdenum cofactor biosynthesis protein C</fullName>
    </alternativeName>
</protein>
<proteinExistence type="inferred from homology"/>
<reference key="1">
    <citation type="journal article" date="2011" name="J. Bacteriol.">
        <title>Complete genome sequence and updated annotation of Desulfovibrio alaskensis G20.</title>
        <authorList>
            <person name="Hauser L.J."/>
            <person name="Land M.L."/>
            <person name="Brown S.D."/>
            <person name="Larimer F."/>
            <person name="Keller K.L."/>
            <person name="Rapp-Giles B.J."/>
            <person name="Price M.N."/>
            <person name="Lin M."/>
            <person name="Bruce D.C."/>
            <person name="Detter J.C."/>
            <person name="Tapia R."/>
            <person name="Han C.S."/>
            <person name="Goodwin L.A."/>
            <person name="Cheng J.F."/>
            <person name="Pitluck S."/>
            <person name="Copeland A."/>
            <person name="Lucas S."/>
            <person name="Nolan M."/>
            <person name="Lapidus A.L."/>
            <person name="Palumbo A.V."/>
            <person name="Wall J.D."/>
        </authorList>
    </citation>
    <scope>NUCLEOTIDE SEQUENCE [LARGE SCALE GENOMIC DNA]</scope>
    <source>
        <strain>ATCC BAA-1058 / DSM 17464 / G20</strain>
    </source>
</reference>
<comment type="function">
    <text evidence="1">Catalyzes the conversion of (8S)-3',8-cyclo-7,8-dihydroguanosine 5'-triphosphate to cyclic pyranopterin monophosphate (cPMP).</text>
</comment>
<comment type="catalytic activity">
    <reaction evidence="1">
        <text>(8S)-3',8-cyclo-7,8-dihydroguanosine 5'-triphosphate = cyclic pyranopterin phosphate + diphosphate</text>
        <dbReference type="Rhea" id="RHEA:49580"/>
        <dbReference type="ChEBI" id="CHEBI:33019"/>
        <dbReference type="ChEBI" id="CHEBI:59648"/>
        <dbReference type="ChEBI" id="CHEBI:131766"/>
        <dbReference type="EC" id="4.6.1.17"/>
    </reaction>
</comment>
<comment type="pathway">
    <text evidence="1">Cofactor biosynthesis; molybdopterin biosynthesis.</text>
</comment>
<comment type="subunit">
    <text evidence="1">Homohexamer; trimer of dimers.</text>
</comment>
<comment type="similarity">
    <text evidence="1">Belongs to the MoaC family.</text>
</comment>
<accession>Q316U6</accession>
<organism>
    <name type="scientific">Oleidesulfovibrio alaskensis (strain ATCC BAA-1058 / DSM 17464 / G20)</name>
    <name type="common">Desulfovibrio alaskensis</name>
    <dbReference type="NCBI Taxonomy" id="207559"/>
    <lineage>
        <taxon>Bacteria</taxon>
        <taxon>Pseudomonadati</taxon>
        <taxon>Thermodesulfobacteriota</taxon>
        <taxon>Desulfovibrionia</taxon>
        <taxon>Desulfovibrionales</taxon>
        <taxon>Desulfovibrionaceae</taxon>
        <taxon>Oleidesulfovibrio</taxon>
    </lineage>
</organism>
<feature type="chain" id="PRO_1000164886" description="Cyclic pyranopterin monophosphate synthase">
    <location>
        <begin position="1"/>
        <end position="159"/>
    </location>
</feature>
<feature type="active site" evidence="1">
    <location>
        <position position="129"/>
    </location>
</feature>
<feature type="binding site" evidence="1">
    <location>
        <begin position="76"/>
        <end position="78"/>
    </location>
    <ligand>
        <name>substrate</name>
    </ligand>
</feature>
<feature type="binding site" evidence="1">
    <location>
        <begin position="114"/>
        <end position="115"/>
    </location>
    <ligand>
        <name>substrate</name>
    </ligand>
</feature>
<keyword id="KW-0456">Lyase</keyword>
<keyword id="KW-0501">Molybdenum cofactor biosynthesis</keyword>
<keyword id="KW-1185">Reference proteome</keyword>
<sequence>MSSGFSHMDGDGSITMVDVGDKKDTRRTAIVRGKVEMAPATLDMLVKQALPKGDVLTTAKVAGIQAAKRTWELIPLCHPLFLSYVDVRFTVDESLPGVVVEAEARTTGQTGVEMEALVAAQVAAMTIYDMCKAVQKDIVLRDCRLVYKSGGKSGEFRAC</sequence>
<name>MOAC_OLEA2</name>
<gene>
    <name evidence="1" type="primary">moaC</name>
    <name type="ordered locus">Dde_0249</name>
</gene>
<evidence type="ECO:0000255" key="1">
    <source>
        <dbReference type="HAMAP-Rule" id="MF_01224"/>
    </source>
</evidence>